<dbReference type="EMBL" id="BC118782">
    <property type="protein sequence ID" value="AAI18783.1"/>
    <property type="molecule type" value="mRNA"/>
</dbReference>
<dbReference type="RefSeq" id="NP_001072213.1">
    <property type="nucleotide sequence ID" value="NM_001078745.1"/>
</dbReference>
<dbReference type="SMR" id="Q0VFL7"/>
<dbReference type="FunCoup" id="Q0VFL7">
    <property type="interactions" value="2004"/>
</dbReference>
<dbReference type="STRING" id="8364.ENSXETP00000054413"/>
<dbReference type="PaxDb" id="8364-ENSXETP00000063918"/>
<dbReference type="DNASU" id="779659"/>
<dbReference type="GeneID" id="779659"/>
<dbReference type="KEGG" id="xtr:779659"/>
<dbReference type="AGR" id="Xenbase:XB-GENE-5767075"/>
<dbReference type="CTD" id="138046"/>
<dbReference type="Xenbase" id="XB-GENE-5767075">
    <property type="gene designation" value="ralyl"/>
</dbReference>
<dbReference type="eggNOG" id="KOG0118">
    <property type="taxonomic scope" value="Eukaryota"/>
</dbReference>
<dbReference type="HOGENOM" id="CLU_079090_1_1_1"/>
<dbReference type="InParanoid" id="Q0VFL7"/>
<dbReference type="OrthoDB" id="6730379at2759"/>
<dbReference type="TreeFam" id="TF330974"/>
<dbReference type="Proteomes" id="UP000008143">
    <property type="component" value="Chromosome 6"/>
</dbReference>
<dbReference type="GO" id="GO:0003723">
    <property type="term" value="F:RNA binding"/>
    <property type="evidence" value="ECO:0007669"/>
    <property type="project" value="UniProtKB-KW"/>
</dbReference>
<dbReference type="FunFam" id="3.30.70.330:FF:000019">
    <property type="entry name" value="heterogeneous nuclear ribonucleoproteins C1/C2 isoform X1"/>
    <property type="match status" value="1"/>
</dbReference>
<dbReference type="Gene3D" id="3.30.70.330">
    <property type="match status" value="1"/>
</dbReference>
<dbReference type="InterPro" id="IPR017347">
    <property type="entry name" value="hnRNP_C"/>
</dbReference>
<dbReference type="InterPro" id="IPR012677">
    <property type="entry name" value="Nucleotide-bd_a/b_plait_sf"/>
</dbReference>
<dbReference type="InterPro" id="IPR035979">
    <property type="entry name" value="RBD_domain_sf"/>
</dbReference>
<dbReference type="InterPro" id="IPR000504">
    <property type="entry name" value="RRM_dom"/>
</dbReference>
<dbReference type="InterPro" id="IPR051186">
    <property type="entry name" value="RRM_HNRPC/RALY_subfam"/>
</dbReference>
<dbReference type="PANTHER" id="PTHR13968">
    <property type="entry name" value="HETEROGENEOUS NUCLEAR RIBONUCLEOPROTEIN"/>
    <property type="match status" value="1"/>
</dbReference>
<dbReference type="PANTHER" id="PTHR13968:SF21">
    <property type="entry name" value="RNA-BINDING RALY-LIKE PROTEIN"/>
    <property type="match status" value="1"/>
</dbReference>
<dbReference type="Pfam" id="PF00076">
    <property type="entry name" value="RRM_1"/>
    <property type="match status" value="1"/>
</dbReference>
<dbReference type="PIRSF" id="PIRSF037992">
    <property type="entry name" value="hnRNP-C_Raly"/>
    <property type="match status" value="1"/>
</dbReference>
<dbReference type="SMART" id="SM00360">
    <property type="entry name" value="RRM"/>
    <property type="match status" value="1"/>
</dbReference>
<dbReference type="SUPFAM" id="SSF54928">
    <property type="entry name" value="RNA-binding domain, RBD"/>
    <property type="match status" value="1"/>
</dbReference>
<dbReference type="PROSITE" id="PS50102">
    <property type="entry name" value="RRM"/>
    <property type="match status" value="1"/>
</dbReference>
<gene>
    <name type="primary">ralyl</name>
</gene>
<proteinExistence type="evidence at transcript level"/>
<keyword id="KW-0175">Coiled coil</keyword>
<keyword id="KW-1185">Reference proteome</keyword>
<keyword id="KW-0694">RNA-binding</keyword>
<evidence type="ECO:0000255" key="1"/>
<evidence type="ECO:0000255" key="2">
    <source>
        <dbReference type="PROSITE-ProRule" id="PRU00176"/>
    </source>
</evidence>
<evidence type="ECO:0000256" key="3">
    <source>
        <dbReference type="SAM" id="MobiDB-lite"/>
    </source>
</evidence>
<evidence type="ECO:0000305" key="4"/>
<comment type="similarity">
    <text evidence="4">Belongs to the RRM HNRPC family. RALY subfamily.</text>
</comment>
<accession>Q0VFL7</accession>
<organism>
    <name type="scientific">Xenopus tropicalis</name>
    <name type="common">Western clawed frog</name>
    <name type="synonym">Silurana tropicalis</name>
    <dbReference type="NCBI Taxonomy" id="8364"/>
    <lineage>
        <taxon>Eukaryota</taxon>
        <taxon>Metazoa</taxon>
        <taxon>Chordata</taxon>
        <taxon>Craniata</taxon>
        <taxon>Vertebrata</taxon>
        <taxon>Euteleostomi</taxon>
        <taxon>Amphibia</taxon>
        <taxon>Batrachia</taxon>
        <taxon>Anura</taxon>
        <taxon>Pipoidea</taxon>
        <taxon>Pipidae</taxon>
        <taxon>Xenopodinae</taxon>
        <taxon>Xenopus</taxon>
        <taxon>Silurana</taxon>
    </lineage>
</organism>
<protein>
    <recommendedName>
        <fullName>RNA-binding Raly-like protein</fullName>
    </recommendedName>
</protein>
<name>RALYL_XENTR</name>
<sequence length="291" mass="32174">MTGKTQTSNVTNKNDPKSINSRVFIGNLNTGIVKKADIEAIFAKYGKIVGCSVHKGYAFVQYISERHARAAVTGENSRIIGGQPLDINMAGEPKPYRPKLGTKRPLSTLYSAYDFDYDYYRDDFYNRLFDYGHGRVPPPPRAAIPLKRPRMSVPTTRRGKGVFSLKGGSRSASGGSSSSGSKLKSDELQTIKKELTQIKTKIDSLLGRLEKIEKQQKAEAGAQKKQTEDHTDSVQEECKSETADNSTEEHIEGGHDADGEEMTDGIEEDFDEDGSNELMENHISDIEDTSN</sequence>
<feature type="chain" id="PRO_0000299527" description="RNA-binding Raly-like protein">
    <location>
        <begin position="1"/>
        <end position="291"/>
    </location>
</feature>
<feature type="domain" description="RRM" evidence="2">
    <location>
        <begin position="21"/>
        <end position="92"/>
    </location>
</feature>
<feature type="region of interest" description="Disordered" evidence="3">
    <location>
        <begin position="152"/>
        <end position="185"/>
    </location>
</feature>
<feature type="region of interest" description="Disordered" evidence="3">
    <location>
        <begin position="216"/>
        <end position="291"/>
    </location>
</feature>
<feature type="coiled-coil region" evidence="1">
    <location>
        <begin position="182"/>
        <end position="219"/>
    </location>
</feature>
<feature type="compositionally biased region" description="Low complexity" evidence="3">
    <location>
        <begin position="164"/>
        <end position="182"/>
    </location>
</feature>
<feature type="compositionally biased region" description="Basic and acidic residues" evidence="3">
    <location>
        <begin position="225"/>
        <end position="257"/>
    </location>
</feature>
<feature type="compositionally biased region" description="Acidic residues" evidence="3">
    <location>
        <begin position="258"/>
        <end position="275"/>
    </location>
</feature>
<reference key="1">
    <citation type="submission" date="2006-07" db="EMBL/GenBank/DDBJ databases">
        <authorList>
            <consortium name="NIH - Xenopus Gene Collection (XGC) project"/>
        </authorList>
    </citation>
    <scope>NUCLEOTIDE SEQUENCE [LARGE SCALE MRNA]</scope>
    <source>
        <tissue>Brain</tissue>
    </source>
</reference>